<gene>
    <name evidence="1" type="primary">rplR</name>
    <name type="ordered locus">VV0391</name>
</gene>
<accession>Q7MPH2</accession>
<evidence type="ECO:0000255" key="1">
    <source>
        <dbReference type="HAMAP-Rule" id="MF_01337"/>
    </source>
</evidence>
<evidence type="ECO:0000305" key="2"/>
<organism>
    <name type="scientific">Vibrio vulnificus (strain YJ016)</name>
    <dbReference type="NCBI Taxonomy" id="196600"/>
    <lineage>
        <taxon>Bacteria</taxon>
        <taxon>Pseudomonadati</taxon>
        <taxon>Pseudomonadota</taxon>
        <taxon>Gammaproteobacteria</taxon>
        <taxon>Vibrionales</taxon>
        <taxon>Vibrionaceae</taxon>
        <taxon>Vibrio</taxon>
    </lineage>
</organism>
<protein>
    <recommendedName>
        <fullName evidence="1">Large ribosomal subunit protein uL18</fullName>
    </recommendedName>
    <alternativeName>
        <fullName evidence="2">50S ribosomal protein L18</fullName>
    </alternativeName>
</protein>
<feature type="chain" id="PRO_0000131385" description="Large ribosomal subunit protein uL18">
    <location>
        <begin position="1"/>
        <end position="117"/>
    </location>
</feature>
<proteinExistence type="inferred from homology"/>
<keyword id="KW-0687">Ribonucleoprotein</keyword>
<keyword id="KW-0689">Ribosomal protein</keyword>
<keyword id="KW-0694">RNA-binding</keyword>
<keyword id="KW-0699">rRNA-binding</keyword>
<dbReference type="EMBL" id="BA000037">
    <property type="protein sequence ID" value="BAC93155.1"/>
    <property type="molecule type" value="Genomic_DNA"/>
</dbReference>
<dbReference type="RefSeq" id="WP_011078817.1">
    <property type="nucleotide sequence ID" value="NC_005139.1"/>
</dbReference>
<dbReference type="SMR" id="Q7MPH2"/>
<dbReference type="STRING" id="672.VV93_v1c03620"/>
<dbReference type="GeneID" id="93895050"/>
<dbReference type="KEGG" id="vvy:VV0391"/>
<dbReference type="eggNOG" id="COG0256">
    <property type="taxonomic scope" value="Bacteria"/>
</dbReference>
<dbReference type="HOGENOM" id="CLU_098841_0_1_6"/>
<dbReference type="Proteomes" id="UP000002675">
    <property type="component" value="Chromosome I"/>
</dbReference>
<dbReference type="GO" id="GO:0022625">
    <property type="term" value="C:cytosolic large ribosomal subunit"/>
    <property type="evidence" value="ECO:0007669"/>
    <property type="project" value="TreeGrafter"/>
</dbReference>
<dbReference type="GO" id="GO:0008097">
    <property type="term" value="F:5S rRNA binding"/>
    <property type="evidence" value="ECO:0007669"/>
    <property type="project" value="TreeGrafter"/>
</dbReference>
<dbReference type="GO" id="GO:0003735">
    <property type="term" value="F:structural constituent of ribosome"/>
    <property type="evidence" value="ECO:0007669"/>
    <property type="project" value="InterPro"/>
</dbReference>
<dbReference type="GO" id="GO:0006412">
    <property type="term" value="P:translation"/>
    <property type="evidence" value="ECO:0007669"/>
    <property type="project" value="UniProtKB-UniRule"/>
</dbReference>
<dbReference type="CDD" id="cd00432">
    <property type="entry name" value="Ribosomal_L18_L5e"/>
    <property type="match status" value="1"/>
</dbReference>
<dbReference type="FunFam" id="3.30.420.100:FF:000001">
    <property type="entry name" value="50S ribosomal protein L18"/>
    <property type="match status" value="1"/>
</dbReference>
<dbReference type="Gene3D" id="3.30.420.100">
    <property type="match status" value="1"/>
</dbReference>
<dbReference type="HAMAP" id="MF_01337_B">
    <property type="entry name" value="Ribosomal_uL18_B"/>
    <property type="match status" value="1"/>
</dbReference>
<dbReference type="InterPro" id="IPR004389">
    <property type="entry name" value="Ribosomal_uL18_bac-type"/>
</dbReference>
<dbReference type="InterPro" id="IPR005484">
    <property type="entry name" value="Ribosomal_uL18_bac/euk"/>
</dbReference>
<dbReference type="NCBIfam" id="TIGR00060">
    <property type="entry name" value="L18_bact"/>
    <property type="match status" value="1"/>
</dbReference>
<dbReference type="PANTHER" id="PTHR12899">
    <property type="entry name" value="39S RIBOSOMAL PROTEIN L18, MITOCHONDRIAL"/>
    <property type="match status" value="1"/>
</dbReference>
<dbReference type="PANTHER" id="PTHR12899:SF3">
    <property type="entry name" value="LARGE RIBOSOMAL SUBUNIT PROTEIN UL18M"/>
    <property type="match status" value="1"/>
</dbReference>
<dbReference type="Pfam" id="PF00861">
    <property type="entry name" value="Ribosomal_L18p"/>
    <property type="match status" value="1"/>
</dbReference>
<dbReference type="SUPFAM" id="SSF53137">
    <property type="entry name" value="Translational machinery components"/>
    <property type="match status" value="1"/>
</dbReference>
<reference key="1">
    <citation type="journal article" date="2003" name="Genome Res.">
        <title>Comparative genome analysis of Vibrio vulnificus, a marine pathogen.</title>
        <authorList>
            <person name="Chen C.-Y."/>
            <person name="Wu K.-M."/>
            <person name="Chang Y.-C."/>
            <person name="Chang C.-H."/>
            <person name="Tsai H.-C."/>
            <person name="Liao T.-L."/>
            <person name="Liu Y.-M."/>
            <person name="Chen H.-J."/>
            <person name="Shen A.B.-T."/>
            <person name="Li J.-C."/>
            <person name="Su T.-L."/>
            <person name="Shao C.-P."/>
            <person name="Lee C.-T."/>
            <person name="Hor L.-I."/>
            <person name="Tsai S.-F."/>
        </authorList>
    </citation>
    <scope>NUCLEOTIDE SEQUENCE [LARGE SCALE GENOMIC DNA]</scope>
    <source>
        <strain>YJ016</strain>
    </source>
</reference>
<comment type="function">
    <text evidence="1">This is one of the proteins that bind and probably mediate the attachment of the 5S RNA into the large ribosomal subunit, where it forms part of the central protuberance.</text>
</comment>
<comment type="subunit">
    <text evidence="1">Part of the 50S ribosomal subunit; part of the 5S rRNA/L5/L18/L25 subcomplex. Contacts the 5S and 23S rRNAs.</text>
</comment>
<comment type="similarity">
    <text evidence="1">Belongs to the universal ribosomal protein uL18 family.</text>
</comment>
<sequence>MDKKASRIRRATRARRKIAELGATRLVVHRTPRHVYAQVIAANGSEVIAAASTVEKAIREQVKYTGNIEAAKAVGKAVAERALEKGVSTVAFDRSGFQYHGRVAALADSAREAGLKF</sequence>
<name>RL18_VIBVY</name>